<proteinExistence type="evidence at protein level"/>
<comment type="function">
    <text>Required for symbiotic nitrogen fixation. Plays a key role in the conversion of malate to acetyl-CoA for efficient tricarboxylic acid cycle function in nitrogen-fixating bacteria.</text>
</comment>
<comment type="catalytic activity">
    <reaction>
        <text>(S)-malate + NAD(+) = pyruvate + CO2 + NADH</text>
        <dbReference type="Rhea" id="RHEA:12653"/>
        <dbReference type="ChEBI" id="CHEBI:15361"/>
        <dbReference type="ChEBI" id="CHEBI:15589"/>
        <dbReference type="ChEBI" id="CHEBI:16526"/>
        <dbReference type="ChEBI" id="CHEBI:57540"/>
        <dbReference type="ChEBI" id="CHEBI:57945"/>
        <dbReference type="EC" id="1.1.1.39"/>
    </reaction>
</comment>
<comment type="cofactor">
    <cofactor evidence="1">
        <name>Mg(2+)</name>
        <dbReference type="ChEBI" id="CHEBI:18420"/>
    </cofactor>
    <cofactor evidence="1">
        <name>Mn(2+)</name>
        <dbReference type="ChEBI" id="CHEBI:29035"/>
    </cofactor>
    <text evidence="1">Divalent metal cations. Prefers magnesium or manganese.</text>
</comment>
<comment type="activity regulation">
    <text>Subject to substrate inhibition and shows allosteric regulation by acetyl-CoA.</text>
</comment>
<comment type="subunit">
    <text>Homooctamer.</text>
</comment>
<comment type="similarity">
    <text evidence="2">In the N-terminal section; belongs to the malic enzymes family.</text>
</comment>
<comment type="similarity">
    <text evidence="2">In the C-terminal section; belongs to the phosphate acetyltransferase and butyryltransferase family.</text>
</comment>
<sequence length="770" mass="82865">MNTGDKAKSQAVPASGDIDQQALFFHRYPRPGKLEIQPTKPLGNQRDLALAYSPGVAAPCLAIKDNPETAADFTARANLVAVVSNGTAVLGLGNIGPLASKPVMEGKAVLFKKFAGIDVFDIEIDAPTVDRMVDVISALEPTFGGINLEDIKAPECFEVERRLREKMEIPVFHDDQHGTAIIVAAAVLNGLELAGKDIAEAKIVASGAGAAALACLNLLVTLGARRENIWVHDIEGLVYKGREALMDEWKAVYAQESDNRVLADSIGGADVFLGLSAAGVLKPELLARMAEKPLIMALANPTPEIMPEVARAARPDAMICTGRSDFPNQVNNVLCFPHIFRGALDCGARTINEEMKMAAVRAIAGLAREEPSDVAARAYSGETPVFGPDYLIPSPFDQRLILRIAPAVAKAAAESGVATRPIQDFDAYLDKLNRFVFRSGFIMKPVFAAAKNAAKNRVIFAEGEDERVLRAAQVLLEEGTAKPILIGRPQIIETRLRRYGLRIRPDVDFEVVNPEGDPRYRDYVDDYFALVGRLGVIPEAARTIVRTNTTVIGALAVKRGEADALICGVEGRYSRHLRDVSQIIGKRSGVLDFSALSLLISQRGATFFTDTYVSFSPSAEEIAQTTVMAANEIRRFGITPRAALVSHSNFGSRDSESAFKMRTALQLVRELAPDLEVDGEMHGDSAISEVLRQRVMPDSTLNGEANLLVFPNLDAANITLGVVKTMTDSLHVGPILLGSALPAHILSPSVTSRGVVNMAALAVVESSHPV</sequence>
<dbReference type="EC" id="1.1.1.39"/>
<dbReference type="EMBL" id="AF017443">
    <property type="protein sequence ID" value="AAB82459.1"/>
    <property type="molecule type" value="Genomic_DNA"/>
</dbReference>
<dbReference type="EMBL" id="AL591688">
    <property type="protein sequence ID" value="CAC46416.1"/>
    <property type="molecule type" value="Genomic_DNA"/>
</dbReference>
<dbReference type="RefSeq" id="NP_385943.1">
    <property type="nucleotide sequence ID" value="NC_003047.1"/>
</dbReference>
<dbReference type="RefSeq" id="WP_003534110.1">
    <property type="nucleotide sequence ID" value="NC_003047.1"/>
</dbReference>
<dbReference type="SMR" id="O30807"/>
<dbReference type="EnsemblBacteria" id="CAC46416">
    <property type="protein sequence ID" value="CAC46416"/>
    <property type="gene ID" value="SMc00169"/>
</dbReference>
<dbReference type="KEGG" id="sme:SMc00169"/>
<dbReference type="PATRIC" id="fig|266834.11.peg.3280"/>
<dbReference type="eggNOG" id="COG0280">
    <property type="taxonomic scope" value="Bacteria"/>
</dbReference>
<dbReference type="eggNOG" id="COG0281">
    <property type="taxonomic scope" value="Bacteria"/>
</dbReference>
<dbReference type="HOGENOM" id="CLU_012366_0_0_5"/>
<dbReference type="OrthoDB" id="9805787at2"/>
<dbReference type="Proteomes" id="UP000001976">
    <property type="component" value="Chromosome"/>
</dbReference>
<dbReference type="GO" id="GO:0016746">
    <property type="term" value="F:acyltransferase activity"/>
    <property type="evidence" value="ECO:0007669"/>
    <property type="project" value="InterPro"/>
</dbReference>
<dbReference type="GO" id="GO:0004471">
    <property type="term" value="F:malate dehydrogenase (decarboxylating) (NAD+) activity"/>
    <property type="evidence" value="ECO:0007669"/>
    <property type="project" value="UniProtKB-EC"/>
</dbReference>
<dbReference type="GO" id="GO:0046872">
    <property type="term" value="F:metal ion binding"/>
    <property type="evidence" value="ECO:0007669"/>
    <property type="project" value="UniProtKB-KW"/>
</dbReference>
<dbReference type="GO" id="GO:0051287">
    <property type="term" value="F:NAD binding"/>
    <property type="evidence" value="ECO:0007669"/>
    <property type="project" value="InterPro"/>
</dbReference>
<dbReference type="GO" id="GO:0006108">
    <property type="term" value="P:malate metabolic process"/>
    <property type="evidence" value="ECO:0007669"/>
    <property type="project" value="InterPro"/>
</dbReference>
<dbReference type="CDD" id="cd05311">
    <property type="entry name" value="NAD_bind_2_malic_enz"/>
    <property type="match status" value="1"/>
</dbReference>
<dbReference type="FunFam" id="3.40.50.10380:FF:000003">
    <property type="entry name" value="NADP-dependent malic enzyme"/>
    <property type="match status" value="1"/>
</dbReference>
<dbReference type="FunFam" id="3.40.50.720:FF:000095">
    <property type="entry name" value="NADP-dependent malic enzyme"/>
    <property type="match status" value="1"/>
</dbReference>
<dbReference type="Gene3D" id="3.40.50.10950">
    <property type="match status" value="1"/>
</dbReference>
<dbReference type="Gene3D" id="3.40.50.10750">
    <property type="entry name" value="Isocitrate/Isopropylmalate dehydrogenase-like"/>
    <property type="match status" value="1"/>
</dbReference>
<dbReference type="Gene3D" id="3.40.50.10380">
    <property type="entry name" value="Malic enzyme, N-terminal domain"/>
    <property type="match status" value="1"/>
</dbReference>
<dbReference type="Gene3D" id="3.40.50.720">
    <property type="entry name" value="NAD(P)-binding Rossmann-like Domain"/>
    <property type="match status" value="1"/>
</dbReference>
<dbReference type="InterPro" id="IPR046346">
    <property type="entry name" value="Aminoacid_DH-like_N_sf"/>
</dbReference>
<dbReference type="InterPro" id="IPR051674">
    <property type="entry name" value="Malate_Decarboxylase"/>
</dbReference>
<dbReference type="InterPro" id="IPR015884">
    <property type="entry name" value="Malic_enzyme_CS"/>
</dbReference>
<dbReference type="InterPro" id="IPR012301">
    <property type="entry name" value="Malic_N_dom"/>
</dbReference>
<dbReference type="InterPro" id="IPR037062">
    <property type="entry name" value="Malic_N_dom_sf"/>
</dbReference>
<dbReference type="InterPro" id="IPR012302">
    <property type="entry name" value="Malic_NAD-bd"/>
</dbReference>
<dbReference type="InterPro" id="IPR045213">
    <property type="entry name" value="Malic_NAD-bd_bact_type"/>
</dbReference>
<dbReference type="InterPro" id="IPR012188">
    <property type="entry name" value="ME_PTA"/>
</dbReference>
<dbReference type="InterPro" id="IPR036291">
    <property type="entry name" value="NAD(P)-bd_dom_sf"/>
</dbReference>
<dbReference type="InterPro" id="IPR042113">
    <property type="entry name" value="P_AcTrfase_dom1"/>
</dbReference>
<dbReference type="InterPro" id="IPR042112">
    <property type="entry name" value="P_AcTrfase_dom2"/>
</dbReference>
<dbReference type="InterPro" id="IPR002505">
    <property type="entry name" value="PTA_PTB"/>
</dbReference>
<dbReference type="PANTHER" id="PTHR43237">
    <property type="entry name" value="NADP-DEPENDENT MALIC ENZYME"/>
    <property type="match status" value="1"/>
</dbReference>
<dbReference type="PANTHER" id="PTHR43237:SF4">
    <property type="entry name" value="NADP-DEPENDENT MALIC ENZYME"/>
    <property type="match status" value="1"/>
</dbReference>
<dbReference type="Pfam" id="PF00390">
    <property type="entry name" value="malic"/>
    <property type="match status" value="1"/>
</dbReference>
<dbReference type="Pfam" id="PF03949">
    <property type="entry name" value="Malic_M"/>
    <property type="match status" value="1"/>
</dbReference>
<dbReference type="Pfam" id="PF01515">
    <property type="entry name" value="PTA_PTB"/>
    <property type="match status" value="1"/>
</dbReference>
<dbReference type="PIRSF" id="PIRSF036684">
    <property type="entry name" value="ME_PTA"/>
    <property type="match status" value="1"/>
</dbReference>
<dbReference type="SMART" id="SM01274">
    <property type="entry name" value="malic"/>
    <property type="match status" value="1"/>
</dbReference>
<dbReference type="SMART" id="SM00919">
    <property type="entry name" value="Malic_M"/>
    <property type="match status" value="1"/>
</dbReference>
<dbReference type="SUPFAM" id="SSF53223">
    <property type="entry name" value="Aminoacid dehydrogenase-like, N-terminal domain"/>
    <property type="match status" value="1"/>
</dbReference>
<dbReference type="SUPFAM" id="SSF53659">
    <property type="entry name" value="Isocitrate/Isopropylmalate dehydrogenase-like"/>
    <property type="match status" value="1"/>
</dbReference>
<dbReference type="SUPFAM" id="SSF51735">
    <property type="entry name" value="NAD(P)-binding Rossmann-fold domains"/>
    <property type="match status" value="1"/>
</dbReference>
<dbReference type="PROSITE" id="PS00331">
    <property type="entry name" value="MALIC_ENZYMES"/>
    <property type="match status" value="1"/>
</dbReference>
<evidence type="ECO:0000250" key="1"/>
<evidence type="ECO:0000305" key="2"/>
<keyword id="KW-0021">Allosteric enzyme</keyword>
<keyword id="KW-0479">Metal-binding</keyword>
<keyword id="KW-0511">Multifunctional enzyme</keyword>
<keyword id="KW-0520">NAD</keyword>
<keyword id="KW-0560">Oxidoreductase</keyword>
<keyword id="KW-1185">Reference proteome</keyword>
<name>MAO1_RHIME</name>
<gene>
    <name type="primary">dme</name>
    <name type="ordered locus">R01837</name>
    <name type="ORF">SMc00169</name>
</gene>
<organism>
    <name type="scientific">Rhizobium meliloti (strain 1021)</name>
    <name type="common">Ensifer meliloti</name>
    <name type="synonym">Sinorhizobium meliloti</name>
    <dbReference type="NCBI Taxonomy" id="266834"/>
    <lineage>
        <taxon>Bacteria</taxon>
        <taxon>Pseudomonadati</taxon>
        <taxon>Pseudomonadota</taxon>
        <taxon>Alphaproteobacteria</taxon>
        <taxon>Hyphomicrobiales</taxon>
        <taxon>Rhizobiaceae</taxon>
        <taxon>Sinorhizobium/Ensifer group</taxon>
        <taxon>Sinorhizobium</taxon>
    </lineage>
</organism>
<accession>O30807</accession>
<feature type="chain" id="PRO_0000160245" description="NAD-dependent malic enzyme">
    <location>
        <begin position="1"/>
        <end position="770"/>
    </location>
</feature>
<feature type="region of interest" description="Malic enzyme">
    <location>
        <begin position="1"/>
        <end position="440"/>
    </location>
</feature>
<feature type="region of interest" description="Phosphate acetyltransferase">
    <location>
        <begin position="441"/>
        <end position="770"/>
    </location>
</feature>
<feature type="active site" description="Proton acceptor" evidence="1">
    <location>
        <position position="107"/>
    </location>
</feature>
<feature type="binding site" evidence="1">
    <location>
        <position position="149"/>
    </location>
    <ligand>
        <name>a divalent metal cation</name>
        <dbReference type="ChEBI" id="CHEBI:60240"/>
    </ligand>
</feature>
<feature type="binding site" evidence="1">
    <location>
        <position position="150"/>
    </location>
    <ligand>
        <name>a divalent metal cation</name>
        <dbReference type="ChEBI" id="CHEBI:60240"/>
    </ligand>
</feature>
<feature type="binding site" evidence="1">
    <location>
        <position position="175"/>
    </location>
    <ligand>
        <name>NAD(+)</name>
        <dbReference type="ChEBI" id="CHEBI:57540"/>
    </ligand>
</feature>
<feature type="binding site" evidence="1">
    <location>
        <position position="300"/>
    </location>
    <ligand>
        <name>NAD(+)</name>
        <dbReference type="ChEBI" id="CHEBI:57540"/>
    </ligand>
</feature>
<reference key="1">
    <citation type="journal article" date="1998" name="J. Biol. Chem.">
        <title>Chimeric structure of the NAD(P)+- and NADP+-dependent malic enzymes of Rhizobium (Sinorhizobium) meliloti.</title>
        <authorList>
            <person name="Mitsch M.J."/>
            <person name="Voegele R.T."/>
            <person name="Cowie A."/>
            <person name="Oesteras M."/>
            <person name="Finan T.M."/>
        </authorList>
    </citation>
    <scope>NUCLEOTIDE SEQUENCE [GENOMIC DNA]</scope>
    <scope>CHARACTERIZATION</scope>
    <source>
        <strain>RCR2011 / SU47</strain>
    </source>
</reference>
<reference key="2">
    <citation type="journal article" date="2001" name="Proc. Natl. Acad. Sci. U.S.A.">
        <title>Analysis of the chromosome sequence of the legume symbiont Sinorhizobium meliloti strain 1021.</title>
        <authorList>
            <person name="Capela D."/>
            <person name="Barloy-Hubler F."/>
            <person name="Gouzy J."/>
            <person name="Bothe G."/>
            <person name="Ampe F."/>
            <person name="Batut J."/>
            <person name="Boistard P."/>
            <person name="Becker A."/>
            <person name="Boutry M."/>
            <person name="Cadieu E."/>
            <person name="Dreano S."/>
            <person name="Gloux S."/>
            <person name="Godrie T."/>
            <person name="Goffeau A."/>
            <person name="Kahn D."/>
            <person name="Kiss E."/>
            <person name="Lelaure V."/>
            <person name="Masuy D."/>
            <person name="Pohl T."/>
            <person name="Portetelle D."/>
            <person name="Puehler A."/>
            <person name="Purnelle B."/>
            <person name="Ramsperger U."/>
            <person name="Renard C."/>
            <person name="Thebault P."/>
            <person name="Vandenbol M."/>
            <person name="Weidner S."/>
            <person name="Galibert F."/>
        </authorList>
    </citation>
    <scope>NUCLEOTIDE SEQUENCE [LARGE SCALE GENOMIC DNA]</scope>
    <source>
        <strain>1021</strain>
    </source>
</reference>
<reference key="3">
    <citation type="journal article" date="2001" name="Science">
        <title>The composite genome of the legume symbiont Sinorhizobium meliloti.</title>
        <authorList>
            <person name="Galibert F."/>
            <person name="Finan T.M."/>
            <person name="Long S.R."/>
            <person name="Puehler A."/>
            <person name="Abola P."/>
            <person name="Ampe F."/>
            <person name="Barloy-Hubler F."/>
            <person name="Barnett M.J."/>
            <person name="Becker A."/>
            <person name="Boistard P."/>
            <person name="Bothe G."/>
            <person name="Boutry M."/>
            <person name="Bowser L."/>
            <person name="Buhrmester J."/>
            <person name="Cadieu E."/>
            <person name="Capela D."/>
            <person name="Chain P."/>
            <person name="Cowie A."/>
            <person name="Davis R.W."/>
            <person name="Dreano S."/>
            <person name="Federspiel N.A."/>
            <person name="Fisher R.F."/>
            <person name="Gloux S."/>
            <person name="Godrie T."/>
            <person name="Goffeau A."/>
            <person name="Golding B."/>
            <person name="Gouzy J."/>
            <person name="Gurjal M."/>
            <person name="Hernandez-Lucas I."/>
            <person name="Hong A."/>
            <person name="Huizar L."/>
            <person name="Hyman R.W."/>
            <person name="Jones T."/>
            <person name="Kahn D."/>
            <person name="Kahn M.L."/>
            <person name="Kalman S."/>
            <person name="Keating D.H."/>
            <person name="Kiss E."/>
            <person name="Komp C."/>
            <person name="Lelaure V."/>
            <person name="Masuy D."/>
            <person name="Palm C."/>
            <person name="Peck M.C."/>
            <person name="Pohl T.M."/>
            <person name="Portetelle D."/>
            <person name="Purnelle B."/>
            <person name="Ramsperger U."/>
            <person name="Surzycki R."/>
            <person name="Thebault P."/>
            <person name="Vandenbol M."/>
            <person name="Vorhoelter F.J."/>
            <person name="Weidner S."/>
            <person name="Wells D.H."/>
            <person name="Wong K."/>
            <person name="Yeh K.-C."/>
            <person name="Batut J."/>
        </authorList>
    </citation>
    <scope>NUCLEOTIDE SEQUENCE [LARGE SCALE GENOMIC DNA]</scope>
    <source>
        <strain>1021</strain>
    </source>
</reference>
<reference key="4">
    <citation type="journal article" date="1999" name="Biochim. Biophys. Acta">
        <title>Characterization of two members of a novel malic enzyme class.</title>
        <authorList>
            <person name="Voegele R.T."/>
            <person name="Mitsch M.J."/>
            <person name="Finan T.M."/>
        </authorList>
    </citation>
    <scope>CHARACTERIZATION</scope>
</reference>
<protein>
    <recommendedName>
        <fullName>NAD-dependent malic enzyme</fullName>
        <shortName>NAD-ME</shortName>
        <ecNumber>1.1.1.39</ecNumber>
    </recommendedName>
</protein>